<dbReference type="EMBL" id="AE014134">
    <property type="protein sequence ID" value="AAF51089.1"/>
    <property type="molecule type" value="Genomic_DNA"/>
</dbReference>
<dbReference type="EMBL" id="BT124968">
    <property type="protein sequence ID" value="ADI33995.1"/>
    <property type="molecule type" value="mRNA"/>
</dbReference>
<dbReference type="EMBL" id="BT150188">
    <property type="protein sequence ID" value="AGR51650.1"/>
    <property type="molecule type" value="mRNA"/>
</dbReference>
<dbReference type="RefSeq" id="NP_608792.1">
    <property type="nucleotide sequence ID" value="NM_134948.2"/>
</dbReference>
<dbReference type="SMR" id="Q9VQS5"/>
<dbReference type="ComplexPortal" id="CPX-2704">
    <property type="entry name" value="Intraflagellar transport complex B"/>
</dbReference>
<dbReference type="FunCoup" id="Q9VQS5">
    <property type="interactions" value="150"/>
</dbReference>
<dbReference type="STRING" id="7227.FBpp0077218"/>
<dbReference type="PaxDb" id="7227-FBpp0077218"/>
<dbReference type="EnsemblMetazoa" id="FBtr0077529">
    <property type="protein sequence ID" value="FBpp0077218"/>
    <property type="gene ID" value="FBgn0031550"/>
</dbReference>
<dbReference type="GeneID" id="33579"/>
<dbReference type="KEGG" id="dme:Dmel_CG8853"/>
<dbReference type="UCSC" id="CG8853-RA">
    <property type="organism name" value="d. melanogaster"/>
</dbReference>
<dbReference type="AGR" id="FB:FBgn0031550"/>
<dbReference type="CTD" id="55081"/>
<dbReference type="FlyBase" id="FBgn0031550">
    <property type="gene designation" value="IFT57"/>
</dbReference>
<dbReference type="VEuPathDB" id="VectorBase:FBgn0031550"/>
<dbReference type="eggNOG" id="KOG0972">
    <property type="taxonomic scope" value="Eukaryota"/>
</dbReference>
<dbReference type="GeneTree" id="ENSGT00390000006307"/>
<dbReference type="HOGENOM" id="CLU_039132_0_0_1"/>
<dbReference type="InParanoid" id="Q9VQS5"/>
<dbReference type="OMA" id="VHAHDQD"/>
<dbReference type="OrthoDB" id="423881at2759"/>
<dbReference type="PhylomeDB" id="Q9VQS5"/>
<dbReference type="Reactome" id="R-DME-5610787">
    <property type="pathway name" value="Hedgehog 'off' state"/>
</dbReference>
<dbReference type="BioGRID-ORCS" id="33579">
    <property type="hits" value="0 hits in 1 CRISPR screen"/>
</dbReference>
<dbReference type="GenomeRNAi" id="33579"/>
<dbReference type="PRO" id="PR:Q9VQS5"/>
<dbReference type="Proteomes" id="UP000000803">
    <property type="component" value="Chromosome 2L"/>
</dbReference>
<dbReference type="Bgee" id="FBgn0031550">
    <property type="expression patterns" value="Expressed in neuron in haltere and 7 other cell types or tissues"/>
</dbReference>
<dbReference type="GO" id="GO:0036064">
    <property type="term" value="C:ciliary basal body"/>
    <property type="evidence" value="ECO:0000250"/>
    <property type="project" value="UniProtKB"/>
</dbReference>
<dbReference type="GO" id="GO:0005929">
    <property type="term" value="C:cilium"/>
    <property type="evidence" value="ECO:0000250"/>
    <property type="project" value="FlyBase"/>
</dbReference>
<dbReference type="GO" id="GO:0005794">
    <property type="term" value="C:Golgi apparatus"/>
    <property type="evidence" value="ECO:0000318"/>
    <property type="project" value="GO_Central"/>
</dbReference>
<dbReference type="GO" id="GO:0030992">
    <property type="term" value="C:intraciliary transport particle B"/>
    <property type="evidence" value="ECO:0000250"/>
    <property type="project" value="FlyBase"/>
</dbReference>
<dbReference type="GO" id="GO:0005815">
    <property type="term" value="C:microtubule organizing center"/>
    <property type="evidence" value="ECO:0000318"/>
    <property type="project" value="GO_Central"/>
</dbReference>
<dbReference type="GO" id="GO:0006915">
    <property type="term" value="P:apoptotic process"/>
    <property type="evidence" value="ECO:0000250"/>
    <property type="project" value="UniProtKB"/>
</dbReference>
<dbReference type="GO" id="GO:0060271">
    <property type="term" value="P:cilium assembly"/>
    <property type="evidence" value="ECO:0000250"/>
    <property type="project" value="FlyBase"/>
</dbReference>
<dbReference type="GO" id="GO:0042073">
    <property type="term" value="P:intraciliary transport"/>
    <property type="evidence" value="ECO:0000318"/>
    <property type="project" value="GO_Central"/>
</dbReference>
<dbReference type="GO" id="GO:1905515">
    <property type="term" value="P:non-motile cilium assembly"/>
    <property type="evidence" value="ECO:0000318"/>
    <property type="project" value="GO_Central"/>
</dbReference>
<dbReference type="GO" id="GO:0042981">
    <property type="term" value="P:regulation of apoptotic process"/>
    <property type="evidence" value="ECO:0000250"/>
    <property type="project" value="UniProtKB"/>
</dbReference>
<dbReference type="InterPro" id="IPR019530">
    <property type="entry name" value="Intra-flagellar_transport_57"/>
</dbReference>
<dbReference type="PANTHER" id="PTHR16011">
    <property type="entry name" value="IFT57/HIPPI"/>
    <property type="match status" value="1"/>
</dbReference>
<dbReference type="PANTHER" id="PTHR16011:SF0">
    <property type="entry name" value="INTRAFLAGELLAR TRANSPORT PROTEIN 57 HOMOLOG"/>
    <property type="match status" value="1"/>
</dbReference>
<dbReference type="Pfam" id="PF10498">
    <property type="entry name" value="IFT57"/>
    <property type="match status" value="1"/>
</dbReference>
<gene>
    <name evidence="4" type="primary">IFT57</name>
    <name evidence="4" type="synonym">Che-13</name>
    <name evidence="4" type="ORF">CG8853</name>
</gene>
<organism>
    <name type="scientific">Drosophila melanogaster</name>
    <name type="common">Fruit fly</name>
    <dbReference type="NCBI Taxonomy" id="7227"/>
    <lineage>
        <taxon>Eukaryota</taxon>
        <taxon>Metazoa</taxon>
        <taxon>Ecdysozoa</taxon>
        <taxon>Arthropoda</taxon>
        <taxon>Hexapoda</taxon>
        <taxon>Insecta</taxon>
        <taxon>Pterygota</taxon>
        <taxon>Neoptera</taxon>
        <taxon>Endopterygota</taxon>
        <taxon>Diptera</taxon>
        <taxon>Brachycera</taxon>
        <taxon>Muscomorpha</taxon>
        <taxon>Ephydroidea</taxon>
        <taxon>Drosophilidae</taxon>
        <taxon>Drosophila</taxon>
        <taxon>Sophophora</taxon>
    </lineage>
</organism>
<feature type="chain" id="PRO_0000328890" description="Intraflagellar transport protein 57 homolog">
    <location>
        <begin position="1"/>
        <end position="405"/>
    </location>
</feature>
<feature type="coiled-coil region" evidence="2">
    <location>
        <begin position="252"/>
        <end position="380"/>
    </location>
</feature>
<feature type="sequence conflict" description="In Ref. 3; ADI33995." evidence="3" ref="3">
    <original>K</original>
    <variation>E</variation>
    <location>
        <position position="74"/>
    </location>
</feature>
<feature type="sequence conflict" description="In Ref. 3; ADI33995." evidence="3" ref="3">
    <original>D</original>
    <variation>N</variation>
    <location>
        <position position="178"/>
    </location>
</feature>
<feature type="sequence conflict" description="In Ref. 3; ADI33995." evidence="3" ref="3">
    <original>N</original>
    <variation>D</variation>
    <location>
        <position position="374"/>
    </location>
</feature>
<feature type="sequence conflict" description="In Ref. 3; ADI33995." evidence="3" ref="3">
    <original>R</original>
    <variation>L</variation>
    <location>
        <position position="391"/>
    </location>
</feature>
<accession>Q9VQS5</accession>
<accession>D6W4R8</accession>
<accession>S5MIX7</accession>
<sequence length="405" mass="47173">MQQDDEQEKSQQLQNFQSDDLLEKLKLLNYEKHLLKEFKLKPLSRFYFVKATNPGEQFYMFTLICWWLCKKLGKDMERPQEYDDPNTVAANIIKLLGEIDVPVDFQPNKLIRGAGPICLSVLEVLSTQACKVAQVGYQKLHIAQEEEFLGDYLEDNAEIILEKLEDEQNAAALSDDSDMELEAHNFRQLNWLNRPQKKSNGDVNLDERNPELDARMSDHQEWHLELERVLPQLKVFVKADARDWRTHISQMETLKTNILENSDTAEAQLKKLHSEFTFDLEKIESREKHLNNELKPLIQQFKELSIELSTIQYAQNQLQEDMEKQTAELNEVMMEQELKKEEMERRGQAMSDGSSVQQIRKAIAKLKDDTAQLNLEVALLVHAHDQDIVVRQLQQNQTTDLANNP</sequence>
<proteinExistence type="evidence at transcript level"/>
<comment type="function">
    <text evidence="1">Required for the formation of cilia.</text>
</comment>
<comment type="subcellular location">
    <subcellularLocation>
        <location evidence="1">Cytoplasm</location>
        <location evidence="1">Cytoskeleton</location>
        <location evidence="1">Cilium basal body</location>
    </subcellularLocation>
</comment>
<comment type="similarity">
    <text evidence="3">Belongs to the IFT57 family.</text>
</comment>
<evidence type="ECO:0000250" key="1"/>
<evidence type="ECO:0000255" key="2"/>
<evidence type="ECO:0000305" key="3"/>
<evidence type="ECO:0000312" key="4">
    <source>
        <dbReference type="FlyBase" id="FBgn0031550"/>
    </source>
</evidence>
<protein>
    <recommendedName>
        <fullName>Intraflagellar transport protein 57 homolog</fullName>
    </recommendedName>
</protein>
<reference key="1">
    <citation type="journal article" date="2000" name="Science">
        <title>The genome sequence of Drosophila melanogaster.</title>
        <authorList>
            <person name="Adams M.D."/>
            <person name="Celniker S.E."/>
            <person name="Holt R.A."/>
            <person name="Evans C.A."/>
            <person name="Gocayne J.D."/>
            <person name="Amanatides P.G."/>
            <person name="Scherer S.E."/>
            <person name="Li P.W."/>
            <person name="Hoskins R.A."/>
            <person name="Galle R.F."/>
            <person name="George R.A."/>
            <person name="Lewis S.E."/>
            <person name="Richards S."/>
            <person name="Ashburner M."/>
            <person name="Henderson S.N."/>
            <person name="Sutton G.G."/>
            <person name="Wortman J.R."/>
            <person name="Yandell M.D."/>
            <person name="Zhang Q."/>
            <person name="Chen L.X."/>
            <person name="Brandon R.C."/>
            <person name="Rogers Y.-H.C."/>
            <person name="Blazej R.G."/>
            <person name="Champe M."/>
            <person name="Pfeiffer B.D."/>
            <person name="Wan K.H."/>
            <person name="Doyle C."/>
            <person name="Baxter E.G."/>
            <person name="Helt G."/>
            <person name="Nelson C.R."/>
            <person name="Miklos G.L.G."/>
            <person name="Abril J.F."/>
            <person name="Agbayani A."/>
            <person name="An H.-J."/>
            <person name="Andrews-Pfannkoch C."/>
            <person name="Baldwin D."/>
            <person name="Ballew R.M."/>
            <person name="Basu A."/>
            <person name="Baxendale J."/>
            <person name="Bayraktaroglu L."/>
            <person name="Beasley E.M."/>
            <person name="Beeson K.Y."/>
            <person name="Benos P.V."/>
            <person name="Berman B.P."/>
            <person name="Bhandari D."/>
            <person name="Bolshakov S."/>
            <person name="Borkova D."/>
            <person name="Botchan M.R."/>
            <person name="Bouck J."/>
            <person name="Brokstein P."/>
            <person name="Brottier P."/>
            <person name="Burtis K.C."/>
            <person name="Busam D.A."/>
            <person name="Butler H."/>
            <person name="Cadieu E."/>
            <person name="Center A."/>
            <person name="Chandra I."/>
            <person name="Cherry J.M."/>
            <person name="Cawley S."/>
            <person name="Dahlke C."/>
            <person name="Davenport L.B."/>
            <person name="Davies P."/>
            <person name="de Pablos B."/>
            <person name="Delcher A."/>
            <person name="Deng Z."/>
            <person name="Mays A.D."/>
            <person name="Dew I."/>
            <person name="Dietz S.M."/>
            <person name="Dodson K."/>
            <person name="Doup L.E."/>
            <person name="Downes M."/>
            <person name="Dugan-Rocha S."/>
            <person name="Dunkov B.C."/>
            <person name="Dunn P."/>
            <person name="Durbin K.J."/>
            <person name="Evangelista C.C."/>
            <person name="Ferraz C."/>
            <person name="Ferriera S."/>
            <person name="Fleischmann W."/>
            <person name="Fosler C."/>
            <person name="Gabrielian A.E."/>
            <person name="Garg N.S."/>
            <person name="Gelbart W.M."/>
            <person name="Glasser K."/>
            <person name="Glodek A."/>
            <person name="Gong F."/>
            <person name="Gorrell J.H."/>
            <person name="Gu Z."/>
            <person name="Guan P."/>
            <person name="Harris M."/>
            <person name="Harris N.L."/>
            <person name="Harvey D.A."/>
            <person name="Heiman T.J."/>
            <person name="Hernandez J.R."/>
            <person name="Houck J."/>
            <person name="Hostin D."/>
            <person name="Houston K.A."/>
            <person name="Howland T.J."/>
            <person name="Wei M.-H."/>
            <person name="Ibegwam C."/>
            <person name="Jalali M."/>
            <person name="Kalush F."/>
            <person name="Karpen G.H."/>
            <person name="Ke Z."/>
            <person name="Kennison J.A."/>
            <person name="Ketchum K.A."/>
            <person name="Kimmel B.E."/>
            <person name="Kodira C.D."/>
            <person name="Kraft C.L."/>
            <person name="Kravitz S."/>
            <person name="Kulp D."/>
            <person name="Lai Z."/>
            <person name="Lasko P."/>
            <person name="Lei Y."/>
            <person name="Levitsky A.A."/>
            <person name="Li J.H."/>
            <person name="Li Z."/>
            <person name="Liang Y."/>
            <person name="Lin X."/>
            <person name="Liu X."/>
            <person name="Mattei B."/>
            <person name="McIntosh T.C."/>
            <person name="McLeod M.P."/>
            <person name="McPherson D."/>
            <person name="Merkulov G."/>
            <person name="Milshina N.V."/>
            <person name="Mobarry C."/>
            <person name="Morris J."/>
            <person name="Moshrefi A."/>
            <person name="Mount S.M."/>
            <person name="Moy M."/>
            <person name="Murphy B."/>
            <person name="Murphy L."/>
            <person name="Muzny D.M."/>
            <person name="Nelson D.L."/>
            <person name="Nelson D.R."/>
            <person name="Nelson K.A."/>
            <person name="Nixon K."/>
            <person name="Nusskern D.R."/>
            <person name="Pacleb J.M."/>
            <person name="Palazzolo M."/>
            <person name="Pittman G.S."/>
            <person name="Pan S."/>
            <person name="Pollard J."/>
            <person name="Puri V."/>
            <person name="Reese M.G."/>
            <person name="Reinert K."/>
            <person name="Remington K."/>
            <person name="Saunders R.D.C."/>
            <person name="Scheeler F."/>
            <person name="Shen H."/>
            <person name="Shue B.C."/>
            <person name="Siden-Kiamos I."/>
            <person name="Simpson M."/>
            <person name="Skupski M.P."/>
            <person name="Smith T.J."/>
            <person name="Spier E."/>
            <person name="Spradling A.C."/>
            <person name="Stapleton M."/>
            <person name="Strong R."/>
            <person name="Sun E."/>
            <person name="Svirskas R."/>
            <person name="Tector C."/>
            <person name="Turner R."/>
            <person name="Venter E."/>
            <person name="Wang A.H."/>
            <person name="Wang X."/>
            <person name="Wang Z.-Y."/>
            <person name="Wassarman D.A."/>
            <person name="Weinstock G.M."/>
            <person name="Weissenbach J."/>
            <person name="Williams S.M."/>
            <person name="Woodage T."/>
            <person name="Worley K.C."/>
            <person name="Wu D."/>
            <person name="Yang S."/>
            <person name="Yao Q.A."/>
            <person name="Ye J."/>
            <person name="Yeh R.-F."/>
            <person name="Zaveri J.S."/>
            <person name="Zhan M."/>
            <person name="Zhang G."/>
            <person name="Zhao Q."/>
            <person name="Zheng L."/>
            <person name="Zheng X.H."/>
            <person name="Zhong F.N."/>
            <person name="Zhong W."/>
            <person name="Zhou X."/>
            <person name="Zhu S.C."/>
            <person name="Zhu X."/>
            <person name="Smith H.O."/>
            <person name="Gibbs R.A."/>
            <person name="Myers E.W."/>
            <person name="Rubin G.M."/>
            <person name="Venter J.C."/>
        </authorList>
    </citation>
    <scope>NUCLEOTIDE SEQUENCE [LARGE SCALE GENOMIC DNA]</scope>
    <source>
        <strain>Berkeley</strain>
    </source>
</reference>
<reference key="2">
    <citation type="journal article" date="2002" name="Genome Biol.">
        <title>Annotation of the Drosophila melanogaster euchromatic genome: a systematic review.</title>
        <authorList>
            <person name="Misra S."/>
            <person name="Crosby M.A."/>
            <person name="Mungall C.J."/>
            <person name="Matthews B.B."/>
            <person name="Campbell K.S."/>
            <person name="Hradecky P."/>
            <person name="Huang Y."/>
            <person name="Kaminker J.S."/>
            <person name="Millburn G.H."/>
            <person name="Prochnik S.E."/>
            <person name="Smith C.D."/>
            <person name="Tupy J.L."/>
            <person name="Whitfield E.J."/>
            <person name="Bayraktaroglu L."/>
            <person name="Berman B.P."/>
            <person name="Bettencourt B.R."/>
            <person name="Celniker S.E."/>
            <person name="de Grey A.D.N.J."/>
            <person name="Drysdale R.A."/>
            <person name="Harris N.L."/>
            <person name="Richter J."/>
            <person name="Russo S."/>
            <person name="Schroeder A.J."/>
            <person name="Shu S.Q."/>
            <person name="Stapleton M."/>
            <person name="Yamada C."/>
            <person name="Ashburner M."/>
            <person name="Gelbart W.M."/>
            <person name="Rubin G.M."/>
            <person name="Lewis S.E."/>
        </authorList>
    </citation>
    <scope>GENOME REANNOTATION</scope>
    <source>
        <strain>Berkeley</strain>
    </source>
</reference>
<reference key="3">
    <citation type="submission" date="2013-07" db="EMBL/GenBank/DDBJ databases">
        <authorList>
            <person name="Carlson J."/>
            <person name="Booth B."/>
            <person name="Frise E."/>
            <person name="Park S."/>
            <person name="Wan K."/>
            <person name="Yu C."/>
            <person name="Celniker S."/>
        </authorList>
    </citation>
    <scope>NUCLEOTIDE SEQUENCE [LARGE SCALE MRNA]</scope>
</reference>
<keyword id="KW-0966">Cell projection</keyword>
<keyword id="KW-0969">Cilium</keyword>
<keyword id="KW-0175">Coiled coil</keyword>
<keyword id="KW-0963">Cytoplasm</keyword>
<keyword id="KW-0206">Cytoskeleton</keyword>
<keyword id="KW-1185">Reference proteome</keyword>
<name>IFT57_DROME</name>